<accession>B4GF83</accession>
<keyword id="KW-0106">Calcium</keyword>
<keyword id="KW-1003">Cell membrane</keyword>
<keyword id="KW-1015">Disulfide bond</keyword>
<keyword id="KW-0325">Glycoprotein</keyword>
<keyword id="KW-0407">Ion channel</keyword>
<keyword id="KW-0406">Ion transport</keyword>
<keyword id="KW-1071">Ligand-gated ion channel</keyword>
<keyword id="KW-0460">Magnesium</keyword>
<keyword id="KW-0472">Membrane</keyword>
<keyword id="KW-0597">Phosphoprotein</keyword>
<keyword id="KW-0628">Postsynaptic cell membrane</keyword>
<keyword id="KW-0675">Receptor</keyword>
<keyword id="KW-1185">Reference proteome</keyword>
<keyword id="KW-0732">Signal</keyword>
<keyword id="KW-0770">Synapse</keyword>
<keyword id="KW-0812">Transmembrane</keyword>
<keyword id="KW-1133">Transmembrane helix</keyword>
<keyword id="KW-0813">Transport</keyword>
<organism>
    <name type="scientific">Drosophila persimilis</name>
    <name type="common">Fruit fly</name>
    <dbReference type="NCBI Taxonomy" id="7234"/>
    <lineage>
        <taxon>Eukaryota</taxon>
        <taxon>Metazoa</taxon>
        <taxon>Ecdysozoa</taxon>
        <taxon>Arthropoda</taxon>
        <taxon>Hexapoda</taxon>
        <taxon>Insecta</taxon>
        <taxon>Pterygota</taxon>
        <taxon>Neoptera</taxon>
        <taxon>Endopterygota</taxon>
        <taxon>Diptera</taxon>
        <taxon>Brachycera</taxon>
        <taxon>Muscomorpha</taxon>
        <taxon>Ephydroidea</taxon>
        <taxon>Drosophilidae</taxon>
        <taxon>Drosophila</taxon>
        <taxon>Sophophora</taxon>
    </lineage>
</organism>
<proteinExistence type="inferred from homology"/>
<feature type="signal peptide" evidence="5">
    <location>
        <begin position="1"/>
        <end position="39"/>
    </location>
</feature>
<feature type="chain" id="PRO_0000363998" description="Glutamate [NMDA] receptor subunit 1" evidence="5">
    <location>
        <begin position="40"/>
        <end position="1004"/>
    </location>
</feature>
<feature type="topological domain" description="Extracellular" evidence="5">
    <location>
        <begin position="40"/>
        <end position="585"/>
    </location>
</feature>
<feature type="transmembrane region" description="Helical" evidence="5">
    <location>
        <begin position="586"/>
        <end position="606"/>
    </location>
</feature>
<feature type="topological domain" description="Cytoplasmic" evidence="5">
    <location>
        <begin position="607"/>
        <end position="663"/>
    </location>
</feature>
<feature type="transmembrane region" description="Helical" evidence="5">
    <location>
        <begin position="664"/>
        <end position="684"/>
    </location>
</feature>
<feature type="topological domain" description="Extracellular" evidence="5">
    <location>
        <begin position="685"/>
        <end position="843"/>
    </location>
</feature>
<feature type="transmembrane region" description="Helical" evidence="5">
    <location>
        <begin position="844"/>
        <end position="864"/>
    </location>
</feature>
<feature type="topological domain" description="Cytoplasmic" evidence="5">
    <location>
        <begin position="865"/>
        <end position="1004"/>
    </location>
</feature>
<feature type="region of interest" description="Disordered" evidence="6">
    <location>
        <begin position="980"/>
        <end position="1004"/>
    </location>
</feature>
<feature type="compositionally biased region" description="Polar residues" evidence="6">
    <location>
        <begin position="994"/>
        <end position="1004"/>
    </location>
</feature>
<feature type="binding site" evidence="2">
    <location>
        <begin position="542"/>
        <end position="544"/>
    </location>
    <ligand>
        <name>glycine</name>
        <dbReference type="ChEBI" id="CHEBI:57305"/>
    </ligand>
</feature>
<feature type="binding site" evidence="2">
    <location>
        <position position="549"/>
    </location>
    <ligand>
        <name>glycine</name>
        <dbReference type="ChEBI" id="CHEBI:57305"/>
    </ligand>
</feature>
<feature type="binding site" evidence="2">
    <location>
        <position position="715"/>
    </location>
    <ligand>
        <name>glycine</name>
        <dbReference type="ChEBI" id="CHEBI:57305"/>
    </ligand>
</feature>
<feature type="binding site" evidence="2">
    <location>
        <position position="759"/>
    </location>
    <ligand>
        <name>glycine</name>
        <dbReference type="ChEBI" id="CHEBI:57305"/>
    </ligand>
</feature>
<feature type="glycosylation site" description="N-linked (GlcNAc...) asparagine" evidence="5">
    <location>
        <position position="270"/>
    </location>
</feature>
<feature type="glycosylation site" description="N-linked (GlcNAc...) asparagine" evidence="5">
    <location>
        <position position="326"/>
    </location>
</feature>
<feature type="glycosylation site" description="N-linked (GlcNAc...) asparagine" evidence="5">
    <location>
        <position position="357"/>
    </location>
</feature>
<feature type="glycosylation site" description="N-linked (GlcNAc...) asparagine" evidence="5">
    <location>
        <position position="409"/>
    </location>
</feature>
<feature type="glycosylation site" description="N-linked (GlcNAc...) asparagine" evidence="5">
    <location>
        <position position="466"/>
    </location>
</feature>
<feature type="glycosylation site" description="N-linked (GlcNAc...) asparagine" evidence="5">
    <location>
        <position position="493"/>
    </location>
</feature>
<feature type="glycosylation site" description="N-linked (GlcNAc...) asparagine" evidence="5">
    <location>
        <position position="513"/>
    </location>
</feature>
<feature type="glycosylation site" description="N-linked (GlcNAc...) asparagine" evidence="5">
    <location>
        <position position="705"/>
    </location>
</feature>
<feature type="disulfide bond" description="Interchain" evidence="3">
    <location>
        <position position="105"/>
    </location>
</feature>
<comment type="function">
    <text evidence="2 4">NMDA receptor subtype of glutamate-gated ion channels with high calcium permeability and voltage-dependent sensitivity to magnesium. Mediated by glycine. This protein plays a key role in synaptic plasticity, synaptogenesis, excitotoxicity, memory acquisition and learning. It mediates neuronal functions in glutamate neurotransmission. Is involved in the cell surface targeting of NMDA receptors. Plays a role in associative learning and in long-term memory consolidation (By similarity).</text>
</comment>
<comment type="subunit">
    <text evidence="1">Forms a heteromeric NMDA channel with Nmdar2.</text>
</comment>
<comment type="subcellular location">
    <subcellularLocation>
        <location evidence="4">Cell membrane</location>
        <topology evidence="4">Multi-pass membrane protein</topology>
    </subcellularLocation>
    <subcellularLocation>
        <location evidence="4">Postsynaptic cell membrane</location>
    </subcellularLocation>
    <subcellularLocation>
        <location evidence="4">Postsynaptic density</location>
    </subcellularLocation>
</comment>
<comment type="similarity">
    <text evidence="7">Belongs to the glutamate-gated ion channel (TC 1.A.10.1) family.</text>
</comment>
<name>NMDA1_DROPE</name>
<protein>
    <recommendedName>
        <fullName evidence="4">Glutamate [NMDA] receptor subunit 1</fullName>
    </recommendedName>
</protein>
<reference evidence="8" key="1">
    <citation type="journal article" date="2007" name="Nature">
        <title>Evolution of genes and genomes on the Drosophila phylogeny.</title>
        <authorList>
            <consortium name="Drosophila 12 genomes consortium"/>
        </authorList>
    </citation>
    <scope>NUCLEOTIDE SEQUENCE [LARGE SCALE GENOMIC DNA]</scope>
    <source>
        <strain>MSH-3 / Tucson 14011-0111.49</strain>
    </source>
</reference>
<dbReference type="EMBL" id="CH479182">
    <property type="protein sequence ID" value="EDW34268.1"/>
    <property type="molecule type" value="Genomic_DNA"/>
</dbReference>
<dbReference type="SMR" id="B4GF83"/>
<dbReference type="STRING" id="7234.B4GF83"/>
<dbReference type="GlyCosmos" id="B4GF83">
    <property type="glycosylation" value="8 sites, No reported glycans"/>
</dbReference>
<dbReference type="EnsemblMetazoa" id="FBtr0187775">
    <property type="protein sequence ID" value="FBpp0186267"/>
    <property type="gene ID" value="FBgn0159752"/>
</dbReference>
<dbReference type="EnsemblMetazoa" id="XM_002017132.2">
    <property type="protein sequence ID" value="XP_002017168.1"/>
    <property type="gene ID" value="LOC6591341"/>
</dbReference>
<dbReference type="EnsemblMetazoa" id="XM_026986227.1">
    <property type="protein sequence ID" value="XP_026842028.1"/>
    <property type="gene ID" value="LOC6591341"/>
</dbReference>
<dbReference type="GeneID" id="6591341"/>
<dbReference type="KEGG" id="dpe:6591341"/>
<dbReference type="CTD" id="40665"/>
<dbReference type="eggNOG" id="KOG4440">
    <property type="taxonomic scope" value="Eukaryota"/>
</dbReference>
<dbReference type="HOGENOM" id="CLU_007257_2_0_1"/>
<dbReference type="OMA" id="FANNTPD"/>
<dbReference type="OrthoDB" id="5984008at2759"/>
<dbReference type="PhylomeDB" id="B4GF83"/>
<dbReference type="Proteomes" id="UP000008744">
    <property type="component" value="Unassembled WGS sequence"/>
</dbReference>
<dbReference type="GO" id="GO:0017146">
    <property type="term" value="C:NMDA selective glutamate receptor complex"/>
    <property type="evidence" value="ECO:0000250"/>
    <property type="project" value="UniProtKB"/>
</dbReference>
<dbReference type="GO" id="GO:0014069">
    <property type="term" value="C:postsynaptic density"/>
    <property type="evidence" value="ECO:0007669"/>
    <property type="project" value="UniProtKB-SubCell"/>
</dbReference>
<dbReference type="GO" id="GO:0045211">
    <property type="term" value="C:postsynaptic membrane"/>
    <property type="evidence" value="ECO:0000250"/>
    <property type="project" value="UniProtKB"/>
</dbReference>
<dbReference type="GO" id="GO:0004970">
    <property type="term" value="F:glutamate-gated receptor activity"/>
    <property type="evidence" value="ECO:0000250"/>
    <property type="project" value="UniProtKB"/>
</dbReference>
<dbReference type="GO" id="GO:0004972">
    <property type="term" value="F:NMDA glutamate receptor activity"/>
    <property type="evidence" value="ECO:0007669"/>
    <property type="project" value="EnsemblMetazoa"/>
</dbReference>
<dbReference type="GO" id="GO:0048149">
    <property type="term" value="P:behavioral response to ethanol"/>
    <property type="evidence" value="ECO:0007669"/>
    <property type="project" value="EnsemblMetazoa"/>
</dbReference>
<dbReference type="GO" id="GO:0055074">
    <property type="term" value="P:calcium ion homeostasis"/>
    <property type="evidence" value="ECO:0000250"/>
    <property type="project" value="UniProtKB"/>
</dbReference>
<dbReference type="GO" id="GO:0007268">
    <property type="term" value="P:chemical synaptic transmission"/>
    <property type="evidence" value="ECO:0000250"/>
    <property type="project" value="UniProtKB"/>
</dbReference>
<dbReference type="GO" id="GO:0035235">
    <property type="term" value="P:ionotropic glutamate receptor signaling pathway"/>
    <property type="evidence" value="ECO:0000250"/>
    <property type="project" value="UniProtKB"/>
</dbReference>
<dbReference type="GO" id="GO:0007616">
    <property type="term" value="P:long-term memory"/>
    <property type="evidence" value="ECO:0000250"/>
    <property type="project" value="UniProtKB"/>
</dbReference>
<dbReference type="GO" id="GO:0072375">
    <property type="term" value="P:medium-term memory"/>
    <property type="evidence" value="ECO:0007669"/>
    <property type="project" value="EnsemblMetazoa"/>
</dbReference>
<dbReference type="GO" id="GO:0008355">
    <property type="term" value="P:olfactory learning"/>
    <property type="evidence" value="ECO:0000250"/>
    <property type="project" value="UniProtKB"/>
</dbReference>
<dbReference type="GO" id="GO:0042331">
    <property type="term" value="P:phototaxis"/>
    <property type="evidence" value="ECO:0007669"/>
    <property type="project" value="EnsemblMetazoa"/>
</dbReference>
<dbReference type="GO" id="GO:0042391">
    <property type="term" value="P:regulation of membrane potential"/>
    <property type="evidence" value="ECO:0000250"/>
    <property type="project" value="UniProtKB"/>
</dbReference>
<dbReference type="GO" id="GO:0050975">
    <property type="term" value="P:sensory perception of touch"/>
    <property type="evidence" value="ECO:0007669"/>
    <property type="project" value="EnsemblMetazoa"/>
</dbReference>
<dbReference type="CDD" id="cd06379">
    <property type="entry name" value="PBP1_iGluR_NMDA_NR1"/>
    <property type="match status" value="1"/>
</dbReference>
<dbReference type="CDD" id="cd13719">
    <property type="entry name" value="PBP2_iGluR_NMDA_Nr1"/>
    <property type="match status" value="1"/>
</dbReference>
<dbReference type="FunFam" id="3.40.190.10:FF:000177">
    <property type="entry name" value="Glutamate [NMDA] receptor subunit 1"/>
    <property type="match status" value="1"/>
</dbReference>
<dbReference type="FunFam" id="3.40.50.2300:FF:000266">
    <property type="entry name" value="Glutamate [NMDA] receptor subunit 1"/>
    <property type="match status" value="1"/>
</dbReference>
<dbReference type="FunFam" id="3.40.190.10:FF:000010">
    <property type="entry name" value="glutamate receptor ionotropic, NMDA 1 isoform X1"/>
    <property type="match status" value="1"/>
</dbReference>
<dbReference type="FunFam" id="3.40.50.2300:FF:000025">
    <property type="entry name" value="glutamate receptor ionotropic, NMDA 1 isoform X1"/>
    <property type="match status" value="1"/>
</dbReference>
<dbReference type="Gene3D" id="3.40.50.2300">
    <property type="match status" value="2"/>
</dbReference>
<dbReference type="Gene3D" id="3.40.190.10">
    <property type="entry name" value="Periplasmic binding protein-like II"/>
    <property type="match status" value="3"/>
</dbReference>
<dbReference type="InterPro" id="IPR001828">
    <property type="entry name" value="ANF_lig-bd_rcpt"/>
</dbReference>
<dbReference type="InterPro" id="IPR018882">
    <property type="entry name" value="CaM-bd_C0_NMDA_rcpt_NR1"/>
</dbReference>
<dbReference type="InterPro" id="IPR019594">
    <property type="entry name" value="Glu/Gly-bd"/>
</dbReference>
<dbReference type="InterPro" id="IPR001508">
    <property type="entry name" value="Iono_Glu_rcpt_met"/>
</dbReference>
<dbReference type="InterPro" id="IPR015683">
    <property type="entry name" value="Ionotropic_Glu_rcpt"/>
</dbReference>
<dbReference type="InterPro" id="IPR001320">
    <property type="entry name" value="Iontro_rcpt_C"/>
</dbReference>
<dbReference type="InterPro" id="IPR049872">
    <property type="entry name" value="NMDA1-like_ligand-bd"/>
</dbReference>
<dbReference type="InterPro" id="IPR049873">
    <property type="entry name" value="NMDA1-like_N"/>
</dbReference>
<dbReference type="InterPro" id="IPR028082">
    <property type="entry name" value="Peripla_BP_I"/>
</dbReference>
<dbReference type="PANTHER" id="PTHR18966">
    <property type="entry name" value="IONOTROPIC GLUTAMATE RECEPTOR"/>
    <property type="match status" value="1"/>
</dbReference>
<dbReference type="Pfam" id="PF01094">
    <property type="entry name" value="ANF_receptor"/>
    <property type="match status" value="1"/>
</dbReference>
<dbReference type="Pfam" id="PF10562">
    <property type="entry name" value="CaM_bdg_C0"/>
    <property type="match status" value="1"/>
</dbReference>
<dbReference type="Pfam" id="PF00060">
    <property type="entry name" value="Lig_chan"/>
    <property type="match status" value="1"/>
</dbReference>
<dbReference type="Pfam" id="PF10613">
    <property type="entry name" value="Lig_chan-Glu_bd"/>
    <property type="match status" value="1"/>
</dbReference>
<dbReference type="PRINTS" id="PR00177">
    <property type="entry name" value="NMDARECEPTOR"/>
</dbReference>
<dbReference type="SMART" id="SM00918">
    <property type="entry name" value="Lig_chan-Glu_bd"/>
    <property type="match status" value="1"/>
</dbReference>
<dbReference type="SMART" id="SM00079">
    <property type="entry name" value="PBPe"/>
    <property type="match status" value="1"/>
</dbReference>
<dbReference type="SUPFAM" id="SSF53822">
    <property type="entry name" value="Periplasmic binding protein-like I"/>
    <property type="match status" value="1"/>
</dbReference>
<dbReference type="SUPFAM" id="SSF53850">
    <property type="entry name" value="Periplasmic binding protein-like II"/>
    <property type="match status" value="1"/>
</dbReference>
<dbReference type="SUPFAM" id="SSF81324">
    <property type="entry name" value="Voltage-gated potassium channels"/>
    <property type="match status" value="1"/>
</dbReference>
<gene>
    <name evidence="4" type="primary">Nmdar1</name>
    <name type="ORF">GL22160</name>
</gene>
<sequence>MAGTDSPAAARFVYRCLLFAPAIVVGLLLPLTLPPIAAAQRHTASDNPSTYNIGGVLSNSESETYFHTIISHLNFDQQYVPRKVTYYDKTIRMDKNPIKTVFNVCDKLIENRVYAVVVSHEQTSGDLSPAAVSYTSGFYSIPVIGISSRDAAFSDKNIHVSFLRTVPPYYHQADVWLEMLSHFAYTKVIIIHSSDTDGRAILGRFQTTSQTYYDDVDVRATVELIVEFEPKLESFTEHLIDMKTAQSRVYLMYASTEDAQVIFRDAGEYNMTGEGHVWIVTEQALFANNTPDGVLGLQLEHAHSDKGHIRDSVYVLASAIKEMISNETIAEAPKDCGDSAVNWESGKRLFQYLKSRNITGETGQVAFDDNGDRIYAGYDVINIREHQKKHVVGKFSYDSMRAKMRMNINDSEIIWPGKQNRKPEGIMIPTHLKVLTIEEKPFVYVRRMGDDEFRCEPDERPCPLFNATDSTANEYCCRGYCIDLLIELSKRINFTYDLALSPDGQFGHYLLRNNSGAMTLRKEWTGLMGELVNERADMIVAPLTINPERAEYIEFSKPFKYQGITILEKKPSRSSTLVSFLQPFSNTLWILVMVSVHVVALVLYLLDRFSPFGRFKLSHSDSNEEKALNLSSAVWFAWGVLLNSGIGEGTPRSFSARVLGMVWAGFAMIIVASYTANLAAFLVLERPKTKLSGINDARLRNTMENLTCATVKGSSVDMYFRRQVELSNMYRTMEANNYATAEQAIQDVKKGKLMAFIWDSSRLEYEASKDCELVTAGELFGRSGYGVGLQKGSPWTDSVTLAILEFHESGFMEKLDKQWIFHGHVQQNCELFEKTPNTLGLKNMAGVFILVGVGIAGGVGLIIIEVIYKKHQVKKQKRLDIARHAADKWRGTIEKRKTIRASLAMQRQYNVGLNSTHPPGTISLAVDKRRYPRLGQRLGPERAWPGDAADVLRTRRPYELGKPGQSPKVMGATPAMLGRTRPQQNILPPRYSPGYTSDVSHLVV</sequence>
<evidence type="ECO:0000250" key="1"/>
<evidence type="ECO:0000250" key="2">
    <source>
        <dbReference type="UniProtKB" id="P35439"/>
    </source>
</evidence>
<evidence type="ECO:0000250" key="3">
    <source>
        <dbReference type="UniProtKB" id="Q05586"/>
    </source>
</evidence>
<evidence type="ECO:0000250" key="4">
    <source>
        <dbReference type="UniProtKB" id="Q24418"/>
    </source>
</evidence>
<evidence type="ECO:0000255" key="5"/>
<evidence type="ECO:0000256" key="6">
    <source>
        <dbReference type="SAM" id="MobiDB-lite"/>
    </source>
</evidence>
<evidence type="ECO:0000305" key="7"/>
<evidence type="ECO:0000312" key="8">
    <source>
        <dbReference type="EMBL" id="EDW34268.1"/>
    </source>
</evidence>